<protein>
    <recommendedName>
        <fullName>Protein-L-isoaspartate O-methyltransferase</fullName>
        <ecNumber>2.1.1.77</ecNumber>
    </recommendedName>
    <alternativeName>
        <fullName>L-isoaspartyl protein carboxyl methyltransferase</fullName>
    </alternativeName>
    <alternativeName>
        <fullName>Protein L-isoaspartyl methyltransferase</fullName>
    </alternativeName>
    <alternativeName>
        <fullName>Protein-beta-aspartate methyltransferase</fullName>
        <shortName>PIMT</shortName>
    </alternativeName>
</protein>
<proteinExistence type="inferred from homology"/>
<organism>
    <name type="scientific">Pyrococcus horikoshii (strain ATCC 700860 / DSM 12428 / JCM 9974 / NBRC 100139 / OT-3)</name>
    <dbReference type="NCBI Taxonomy" id="70601"/>
    <lineage>
        <taxon>Archaea</taxon>
        <taxon>Methanobacteriati</taxon>
        <taxon>Methanobacteriota</taxon>
        <taxon>Thermococci</taxon>
        <taxon>Thermococcales</taxon>
        <taxon>Thermococcaceae</taxon>
        <taxon>Pyrococcus</taxon>
    </lineage>
</organism>
<gene>
    <name type="primary">pcm</name>
    <name type="ordered locus">PH1886</name>
</gene>
<reference key="1">
    <citation type="journal article" date="1998" name="DNA Res.">
        <title>Complete sequence and gene organization of the genome of a hyper-thermophilic archaebacterium, Pyrococcus horikoshii OT3.</title>
        <authorList>
            <person name="Kawarabayasi Y."/>
            <person name="Sawada M."/>
            <person name="Horikawa H."/>
            <person name="Haikawa Y."/>
            <person name="Hino Y."/>
            <person name="Yamamoto S."/>
            <person name="Sekine M."/>
            <person name="Baba S."/>
            <person name="Kosugi H."/>
            <person name="Hosoyama A."/>
            <person name="Nagai Y."/>
            <person name="Sakai M."/>
            <person name="Ogura K."/>
            <person name="Otsuka R."/>
            <person name="Nakazawa H."/>
            <person name="Takamiya M."/>
            <person name="Ohfuku Y."/>
            <person name="Funahashi T."/>
            <person name="Tanaka T."/>
            <person name="Kudoh Y."/>
            <person name="Yamazaki J."/>
            <person name="Kushida N."/>
            <person name="Oguchi A."/>
            <person name="Aoki K."/>
            <person name="Yoshizawa T."/>
            <person name="Nakamura Y."/>
            <person name="Robb F.T."/>
            <person name="Horikoshi K."/>
            <person name="Masuchi Y."/>
            <person name="Shizuya H."/>
            <person name="Kikuchi H."/>
        </authorList>
    </citation>
    <scope>NUCLEOTIDE SEQUENCE [LARGE SCALE GENOMIC DNA]</scope>
    <source>
        <strain>ATCC 700860 / DSM 12428 / JCM 9974 / NBRC 100139 / OT-3</strain>
    </source>
</reference>
<sequence>MMDEKELYEKWKRTVEMLKAEGIIKSEKVERAFLKCPRYLFVEDRYKKYAHVDEPLPIPAGQTISAPHMVAIMLEIADLKPGMNVLEVGTGSGWNAALIAEIVKGDVYSIERIPELVEFAKRNLERAGVKNVHVILGDGSKGFPPKSPYDAIIVTAGAPEIPKPLVEQLKPGGKLIIPVGSYHLWQELLEVIKREDGSIKIKNHGGVAFVPLIGEHGWRE</sequence>
<dbReference type="EC" id="2.1.1.77"/>
<dbReference type="EMBL" id="BA000001">
    <property type="protein sequence ID" value="BAA31008.1"/>
    <property type="status" value="ALT_INIT"/>
    <property type="molecule type" value="Genomic_DNA"/>
</dbReference>
<dbReference type="PIR" id="A71202">
    <property type="entry name" value="A71202"/>
</dbReference>
<dbReference type="SMR" id="O59534"/>
<dbReference type="STRING" id="70601.gene:9378892"/>
<dbReference type="EnsemblBacteria" id="BAA31008">
    <property type="protein sequence ID" value="BAA31008"/>
    <property type="gene ID" value="BAA31008"/>
</dbReference>
<dbReference type="KEGG" id="pho:PH1886"/>
<dbReference type="eggNOG" id="arCOG00976">
    <property type="taxonomic scope" value="Archaea"/>
</dbReference>
<dbReference type="Proteomes" id="UP000000752">
    <property type="component" value="Chromosome"/>
</dbReference>
<dbReference type="GO" id="GO:0005737">
    <property type="term" value="C:cytoplasm"/>
    <property type="evidence" value="ECO:0007669"/>
    <property type="project" value="UniProtKB-SubCell"/>
</dbReference>
<dbReference type="GO" id="GO:0004719">
    <property type="term" value="F:protein-L-isoaspartate (D-aspartate) O-methyltransferase activity"/>
    <property type="evidence" value="ECO:0007669"/>
    <property type="project" value="UniProtKB-UniRule"/>
</dbReference>
<dbReference type="GO" id="GO:0032259">
    <property type="term" value="P:methylation"/>
    <property type="evidence" value="ECO:0007669"/>
    <property type="project" value="UniProtKB-KW"/>
</dbReference>
<dbReference type="GO" id="GO:0036211">
    <property type="term" value="P:protein modification process"/>
    <property type="evidence" value="ECO:0007669"/>
    <property type="project" value="UniProtKB-UniRule"/>
</dbReference>
<dbReference type="GO" id="GO:0030091">
    <property type="term" value="P:protein repair"/>
    <property type="evidence" value="ECO:0007669"/>
    <property type="project" value="UniProtKB-UniRule"/>
</dbReference>
<dbReference type="CDD" id="cd02440">
    <property type="entry name" value="AdoMet_MTases"/>
    <property type="match status" value="1"/>
</dbReference>
<dbReference type="FunFam" id="3.40.50.150:FF:000010">
    <property type="entry name" value="Protein-L-isoaspartate O-methyltransferase"/>
    <property type="match status" value="1"/>
</dbReference>
<dbReference type="Gene3D" id="3.40.50.150">
    <property type="entry name" value="Vaccinia Virus protein VP39"/>
    <property type="match status" value="1"/>
</dbReference>
<dbReference type="HAMAP" id="MF_00090">
    <property type="entry name" value="PIMT"/>
    <property type="match status" value="1"/>
</dbReference>
<dbReference type="InterPro" id="IPR000682">
    <property type="entry name" value="PCMT"/>
</dbReference>
<dbReference type="InterPro" id="IPR029063">
    <property type="entry name" value="SAM-dependent_MTases_sf"/>
</dbReference>
<dbReference type="NCBIfam" id="TIGR00080">
    <property type="entry name" value="pimt"/>
    <property type="match status" value="1"/>
</dbReference>
<dbReference type="NCBIfam" id="NF001453">
    <property type="entry name" value="PRK00312.1"/>
    <property type="match status" value="1"/>
</dbReference>
<dbReference type="PANTHER" id="PTHR11579">
    <property type="entry name" value="PROTEIN-L-ISOASPARTATE O-METHYLTRANSFERASE"/>
    <property type="match status" value="1"/>
</dbReference>
<dbReference type="PANTHER" id="PTHR11579:SF0">
    <property type="entry name" value="PROTEIN-L-ISOASPARTATE(D-ASPARTATE) O-METHYLTRANSFERASE"/>
    <property type="match status" value="1"/>
</dbReference>
<dbReference type="Pfam" id="PF01135">
    <property type="entry name" value="PCMT"/>
    <property type="match status" value="1"/>
</dbReference>
<dbReference type="SUPFAM" id="SSF53335">
    <property type="entry name" value="S-adenosyl-L-methionine-dependent methyltransferases"/>
    <property type="match status" value="1"/>
</dbReference>
<dbReference type="PROSITE" id="PS01279">
    <property type="entry name" value="PCMT"/>
    <property type="match status" value="1"/>
</dbReference>
<evidence type="ECO:0000250" key="1"/>
<evidence type="ECO:0000305" key="2"/>
<comment type="function">
    <text evidence="1">Catalyzes the methyl esterification of L-isoaspartyl residues in peptides and proteins that result from spontaneous decomposition of normal L-aspartyl and L-asparaginyl residues. It plays a role in the repair and/or degradation of damaged proteins (By similarity).</text>
</comment>
<comment type="catalytic activity">
    <reaction>
        <text>[protein]-L-isoaspartate + S-adenosyl-L-methionine = [protein]-L-isoaspartate alpha-methyl ester + S-adenosyl-L-homocysteine</text>
        <dbReference type="Rhea" id="RHEA:12705"/>
        <dbReference type="Rhea" id="RHEA-COMP:12143"/>
        <dbReference type="Rhea" id="RHEA-COMP:12144"/>
        <dbReference type="ChEBI" id="CHEBI:57856"/>
        <dbReference type="ChEBI" id="CHEBI:59789"/>
        <dbReference type="ChEBI" id="CHEBI:90596"/>
        <dbReference type="ChEBI" id="CHEBI:90598"/>
        <dbReference type="EC" id="2.1.1.77"/>
    </reaction>
</comment>
<comment type="subcellular location">
    <subcellularLocation>
        <location evidence="1">Cytoplasm</location>
    </subcellularLocation>
</comment>
<comment type="similarity">
    <text evidence="2">Belongs to the methyltransferase superfamily. L-isoaspartyl/D-aspartyl protein methyltransferase family.</text>
</comment>
<comment type="sequence caution" evidence="2">
    <conflict type="erroneous initiation">
        <sequence resource="EMBL-CDS" id="BAA31008"/>
    </conflict>
</comment>
<keyword id="KW-0963">Cytoplasm</keyword>
<keyword id="KW-0489">Methyltransferase</keyword>
<keyword id="KW-0949">S-adenosyl-L-methionine</keyword>
<keyword id="KW-0808">Transferase</keyword>
<accession>O59534</accession>
<name>PIMT_PYRHO</name>
<feature type="chain" id="PRO_0000111924" description="Protein-L-isoaspartate O-methyltransferase">
    <location>
        <begin position="1"/>
        <end position="220"/>
    </location>
</feature>
<feature type="active site" evidence="1">
    <location>
        <position position="65"/>
    </location>
</feature>